<keyword id="KW-0025">Alternative splicing</keyword>
<keyword id="KW-1015">Disulfide bond</keyword>
<keyword id="KW-0325">Glycoprotein</keyword>
<keyword id="KW-1032">Host cell membrane</keyword>
<keyword id="KW-1043">Host membrane</keyword>
<keyword id="KW-0945">Host-virus interaction</keyword>
<keyword id="KW-0375">Hydrogen ion transport</keyword>
<keyword id="KW-1083">Inhibition of host autophagy by virus</keyword>
<keyword id="KW-0407">Ion channel</keyword>
<keyword id="KW-0406">Ion transport</keyword>
<keyword id="KW-0449">Lipoprotein</keyword>
<keyword id="KW-0472">Membrane</keyword>
<keyword id="KW-0564">Palmitate</keyword>
<keyword id="KW-0597">Phosphoprotein</keyword>
<keyword id="KW-0735">Signal-anchor</keyword>
<keyword id="KW-0812">Transmembrane</keyword>
<keyword id="KW-1133">Transmembrane helix</keyword>
<keyword id="KW-0813">Transport</keyword>
<keyword id="KW-1182">Viral ion channel</keyword>
<keyword id="KW-0946">Virion</keyword>
<sequence length="97" mass="11159">MSLLTEVETPIRSEWGCRCNDSSDPLVVAASIIGILHLILWILDRLFFKCIYRFFEHGLKRGPSTEGVPESMREEYRKEQQSAVDADDSHFVSIELE</sequence>
<evidence type="ECO:0000255" key="1">
    <source>
        <dbReference type="HAMAP-Rule" id="MF_04069"/>
    </source>
</evidence>
<evidence type="ECO:0000256" key="2">
    <source>
        <dbReference type="SAM" id="MobiDB-lite"/>
    </source>
</evidence>
<protein>
    <recommendedName>
        <fullName evidence="1">Matrix protein 2</fullName>
    </recommendedName>
    <alternativeName>
        <fullName evidence="1">Proton channel protein M2</fullName>
    </alternativeName>
</protein>
<accession>Q2PIK5</accession>
<gene>
    <name evidence="1" type="primary">M</name>
</gene>
<proteinExistence type="inferred from homology"/>
<comment type="function">
    <text evidence="1">Forms a proton-selective ion channel that is necessary for the efficient release of the viral genome during virus entry. After attaching to the cell surface, the virion enters the cell by endocytosis. Acidification of the endosome triggers M2 ion channel activity. The influx of protons into virion interior is believed to disrupt interactions between the viral ribonucleoprotein (RNP), matrix protein 1 (M1), and lipid bilayers, thereby freeing the viral genome from interaction with viral proteins and enabling RNA segments to migrate to the host cell nucleus, where influenza virus RNA transcription and replication occur. Also plays a role in viral proteins secretory pathway. Elevates the intravesicular pH of normally acidic compartments, such as trans-Golgi network, preventing newly formed hemagglutinin from premature switching to the fusion-active conformation.</text>
</comment>
<comment type="activity regulation">
    <text>The M2 protein from most influenza A strains is inhibited by amantadine and rimantadine, resulting in viral uncoating incapacity. Emergence of amantadine-resistant variants is usually rapid.</text>
</comment>
<comment type="subunit">
    <text evidence="1">Homotetramer; composed of two disulfide-linked dimers held together by non-covalent interactions. May interact with matrix protein 1.</text>
</comment>
<comment type="subcellular location">
    <subcellularLocation>
        <location evidence="1">Virion membrane</location>
    </subcellularLocation>
    <subcellularLocation>
        <location evidence="1">Host apical cell membrane</location>
        <topology evidence="1">Single-pass type III membrane protein</topology>
    </subcellularLocation>
    <text evidence="1">Abundantly expressed at the apical plasma membrane in infected polarized epithelial cells, in close proximity to budding and assembled virions. Minor component of virions (only 16-20 molecules/virion).</text>
</comment>
<comment type="alternative products">
    <event type="alternative splicing"/>
    <isoform>
        <id>Q2PIK5-1</id>
        <name>M2</name>
        <sequence type="displayed"/>
    </isoform>
    <isoform>
        <id>Q2PIK4-1</id>
        <name>M1</name>
        <sequence type="external"/>
    </isoform>
    <text>Only the first 9 residues are shared by the 2 isoforms.</text>
</comment>
<comment type="domain">
    <text evidence="1">Cytoplasmic tail plays an important role in virion assembly and morphogenesis.</text>
</comment>
<comment type="miscellaneous">
    <text evidence="1">When the channel is activated, one or more imidazole moieties of His-37 probably become bi-protonated.</text>
</comment>
<comment type="similarity">
    <text evidence="1">Belongs to the influenza viruses matrix protein M2 family.</text>
</comment>
<organism>
    <name type="scientific">Influenza A virus (strain A/Memphis/110/1976 H3N2)</name>
    <dbReference type="NCBI Taxonomy" id="383581"/>
    <lineage>
        <taxon>Viruses</taxon>
        <taxon>Riboviria</taxon>
        <taxon>Orthornavirae</taxon>
        <taxon>Negarnaviricota</taxon>
        <taxon>Polyploviricotina</taxon>
        <taxon>Insthoviricetes</taxon>
        <taxon>Articulavirales</taxon>
        <taxon>Orthomyxoviridae</taxon>
        <taxon>Alphainfluenzavirus</taxon>
        <taxon>Alphainfluenzavirus influenzae</taxon>
        <taxon>Influenza A virus</taxon>
    </lineage>
</organism>
<reference key="1">
    <citation type="submission" date="2005-12" db="EMBL/GenBank/DDBJ databases">
        <title>The NIAID influenza genome sequencing project.</title>
        <authorList>
            <person name="Ghedin E."/>
            <person name="Spiro D."/>
            <person name="Miller N."/>
            <person name="Zaborsky J."/>
            <person name="Feldblyum T."/>
            <person name="Subbu V."/>
            <person name="Shumway M."/>
            <person name="Sparenborg J."/>
            <person name="Groveman L."/>
            <person name="Halpin R."/>
            <person name="Sitz J."/>
            <person name="Koo H."/>
            <person name="Salzberg S.L."/>
            <person name="Webster R.G."/>
            <person name="Hoffmann E."/>
            <person name="Krauss S."/>
            <person name="Naeve C."/>
            <person name="Bao Y."/>
            <person name="Bolotov P."/>
            <person name="Dernovoy D."/>
            <person name="Kiryutin B."/>
            <person name="Lipman D.J."/>
            <person name="Tatusova T."/>
        </authorList>
    </citation>
    <scope>NUCLEOTIDE SEQUENCE [GENOMIC RNA]</scope>
</reference>
<dbReference type="EMBL" id="CY006836">
    <property type="protein sequence ID" value="ABC02268.1"/>
    <property type="molecule type" value="Genomic_RNA"/>
</dbReference>
<dbReference type="SMR" id="Q2PIK5"/>
<dbReference type="IntAct" id="Q2PIK5">
    <property type="interactions" value="1"/>
</dbReference>
<dbReference type="GlyCosmos" id="Q2PIK5">
    <property type="glycosylation" value="1 site, No reported glycans"/>
</dbReference>
<dbReference type="Proteomes" id="UP000007792">
    <property type="component" value="Genome"/>
</dbReference>
<dbReference type="GO" id="GO:0020002">
    <property type="term" value="C:host cell plasma membrane"/>
    <property type="evidence" value="ECO:0007669"/>
    <property type="project" value="UniProtKB-SubCell"/>
</dbReference>
<dbReference type="GO" id="GO:0016020">
    <property type="term" value="C:membrane"/>
    <property type="evidence" value="ECO:0007669"/>
    <property type="project" value="UniProtKB-UniRule"/>
</dbReference>
<dbReference type="GO" id="GO:0055036">
    <property type="term" value="C:virion membrane"/>
    <property type="evidence" value="ECO:0007669"/>
    <property type="project" value="UniProtKB-SubCell"/>
</dbReference>
<dbReference type="GO" id="GO:0005216">
    <property type="term" value="F:monoatomic ion channel activity"/>
    <property type="evidence" value="ECO:0007669"/>
    <property type="project" value="UniProtKB-UniRule"/>
</dbReference>
<dbReference type="GO" id="GO:0015078">
    <property type="term" value="F:proton transmembrane transporter activity"/>
    <property type="evidence" value="ECO:0007669"/>
    <property type="project" value="UniProtKB-UniRule"/>
</dbReference>
<dbReference type="GO" id="GO:0051259">
    <property type="term" value="P:protein complex oligomerization"/>
    <property type="evidence" value="ECO:0007669"/>
    <property type="project" value="UniProtKB-UniRule"/>
</dbReference>
<dbReference type="GO" id="GO:0044694">
    <property type="term" value="P:symbiont genome entry into host cell via pore formation in plasma membrane"/>
    <property type="evidence" value="ECO:0007669"/>
    <property type="project" value="UniProtKB-UniRule"/>
</dbReference>
<dbReference type="GO" id="GO:0140321">
    <property type="term" value="P:symbiont-mediated suppression of host autophagy"/>
    <property type="evidence" value="ECO:0007669"/>
    <property type="project" value="UniProtKB-KW"/>
</dbReference>
<dbReference type="Gene3D" id="6.10.250.1640">
    <property type="match status" value="1"/>
</dbReference>
<dbReference type="HAMAP" id="MF_04069">
    <property type="entry name" value="INFV_M2"/>
    <property type="match status" value="1"/>
</dbReference>
<dbReference type="InterPro" id="IPR002089">
    <property type="entry name" value="Flu_M2"/>
</dbReference>
<dbReference type="Pfam" id="PF00599">
    <property type="entry name" value="Flu_M2"/>
    <property type="match status" value="1"/>
</dbReference>
<feature type="chain" id="PRO_0000326356" description="Matrix protein 2">
    <location>
        <begin position="1"/>
        <end position="97"/>
    </location>
</feature>
<feature type="topological domain" description="Virion surface" evidence="1">
    <location>
        <begin position="1"/>
        <end position="22"/>
    </location>
</feature>
<feature type="transmembrane region" description="Helical; Signal-anchor for type III membrane protein" evidence="1">
    <location>
        <begin position="23"/>
        <end position="43"/>
    </location>
</feature>
<feature type="topological domain" description="Intravirion" evidence="1">
    <location>
        <begin position="44"/>
        <end position="97"/>
    </location>
</feature>
<feature type="region of interest" description="Disordered" evidence="2">
    <location>
        <begin position="60"/>
        <end position="88"/>
    </location>
</feature>
<feature type="compositionally biased region" description="Basic and acidic residues" evidence="2">
    <location>
        <begin position="71"/>
        <end position="80"/>
    </location>
</feature>
<feature type="site" description="Essential for channel activity, possibly by being protonated during channel activation, and by forming the channel gate and the selective filter" evidence="1">
    <location>
        <position position="37"/>
    </location>
</feature>
<feature type="site" description="Seems to be involved in pH gating" evidence="1">
    <location>
        <position position="41"/>
    </location>
</feature>
<feature type="modified residue" description="Phosphoserine; by host" evidence="1">
    <location>
        <position position="64"/>
    </location>
</feature>
<feature type="modified residue" description="Phosphoserine; by host" evidence="1">
    <location>
        <position position="82"/>
    </location>
</feature>
<feature type="modified residue" description="Phosphoserine; by host" evidence="1">
    <location>
        <position position="93"/>
    </location>
</feature>
<feature type="lipid moiety-binding region" description="S-palmitoyl cysteine; by host" evidence="1">
    <location>
        <position position="50"/>
    </location>
</feature>
<feature type="glycosylation site" description="N-linked (GlcNAc...) asparagine; by host" evidence="1">
    <location>
        <position position="20"/>
    </location>
</feature>
<feature type="disulfide bond" description="Interchain (with C-17)" evidence="1">
    <location>
        <position position="17"/>
    </location>
</feature>
<feature type="disulfide bond" description="Interchain (with C-19)" evidence="1">
    <location>
        <position position="19"/>
    </location>
</feature>
<organismHost>
    <name type="scientific">Aves</name>
    <dbReference type="NCBI Taxonomy" id="8782"/>
</organismHost>
<organismHost>
    <name type="scientific">Cetacea</name>
    <name type="common">whales</name>
    <dbReference type="NCBI Taxonomy" id="9721"/>
</organismHost>
<organismHost>
    <name type="scientific">Homo sapiens</name>
    <name type="common">Human</name>
    <dbReference type="NCBI Taxonomy" id="9606"/>
</organismHost>
<organismHost>
    <name type="scientific">Phocidae</name>
    <name type="common">true seals</name>
    <dbReference type="NCBI Taxonomy" id="9709"/>
</organismHost>
<organismHost>
    <name type="scientific">Sus scrofa</name>
    <name type="common">Pig</name>
    <dbReference type="NCBI Taxonomy" id="9823"/>
</organismHost>
<name>M2_I76A6</name>